<sequence>MKKFDKSIAAFEEAQNLMPGGVNSPVRAFKSVGMNPLFMERGKGSKVYDIDGNEYIDYVLSWGPLIHGHANDRVVEALKAVAEKGTSFGAPTEIENKLAQLVIERVPSIEIVRMVNSGTEATMSALRLARGYTGRNKILKFIGCYHGHGDSLLIKAGSGVATLGLPDSPGVPEGVAKNTITVAYNDLESVKYAFEQFGDDIACIIVEPVAGNMGVVPPQPGFLEGLREVTEQNGALLIFDEVMTGFRVAYNCGQGYYGVTPDLTCLGKVIGGGLPVGAYGGKAEIMRQVAPSGPIYQAGTLSGNPLAMTAGYETLVQLTPESYVEFERKAEMLEAGLRKAAEKHNIPHHINRAGSMIGIFFTDEQVINYDAAKSSNLEFFAAYYREMVEQGVFLPPSQFEGLFLSTAHSDADIEATIAAAEIAMSKLKA</sequence>
<feature type="chain" id="PRO_0000382282" description="Glutamate-1-semialdehyde 2,1-aminomutase 2">
    <location>
        <begin position="1"/>
        <end position="429"/>
    </location>
</feature>
<feature type="modified residue" description="N6-(pyridoxal phosphate)lysine" evidence="1">
    <location>
        <position position="268"/>
    </location>
</feature>
<reference key="1">
    <citation type="journal article" date="2008" name="Chem. Biol. Interact.">
        <title>Extending the Bacillus cereus group genomics to putative food-borne pathogens of different toxicity.</title>
        <authorList>
            <person name="Lapidus A."/>
            <person name="Goltsman E."/>
            <person name="Auger S."/>
            <person name="Galleron N."/>
            <person name="Segurens B."/>
            <person name="Dossat C."/>
            <person name="Land M.L."/>
            <person name="Broussolle V."/>
            <person name="Brillard J."/>
            <person name="Guinebretiere M.-H."/>
            <person name="Sanchis V."/>
            <person name="Nguen-the C."/>
            <person name="Lereclus D."/>
            <person name="Richardson P."/>
            <person name="Wincker P."/>
            <person name="Weissenbach J."/>
            <person name="Ehrlich S.D."/>
            <person name="Sorokin A."/>
        </authorList>
    </citation>
    <scope>NUCLEOTIDE SEQUENCE [LARGE SCALE GENOMIC DNA]</scope>
    <source>
        <strain>KBAB4</strain>
    </source>
</reference>
<protein>
    <recommendedName>
        <fullName evidence="1">Glutamate-1-semialdehyde 2,1-aminomutase 2</fullName>
        <shortName evidence="1">GSA 2</shortName>
        <ecNumber evidence="1">5.4.3.8</ecNumber>
    </recommendedName>
    <alternativeName>
        <fullName evidence="1">Glutamate-1-semialdehyde aminotransferase 2</fullName>
        <shortName evidence="1">GSA-AT 2</shortName>
    </alternativeName>
</protein>
<dbReference type="EC" id="5.4.3.8" evidence="1"/>
<dbReference type="EMBL" id="CP000903">
    <property type="protein sequence ID" value="ABY45465.1"/>
    <property type="molecule type" value="Genomic_DNA"/>
</dbReference>
<dbReference type="SMR" id="A9VIT5"/>
<dbReference type="KEGG" id="bwe:BcerKBAB4_4306"/>
<dbReference type="eggNOG" id="COG0001">
    <property type="taxonomic scope" value="Bacteria"/>
</dbReference>
<dbReference type="HOGENOM" id="CLU_016922_1_5_9"/>
<dbReference type="UniPathway" id="UPA00251">
    <property type="reaction ID" value="UER00317"/>
</dbReference>
<dbReference type="Proteomes" id="UP000002154">
    <property type="component" value="Chromosome"/>
</dbReference>
<dbReference type="GO" id="GO:0005737">
    <property type="term" value="C:cytoplasm"/>
    <property type="evidence" value="ECO:0007669"/>
    <property type="project" value="UniProtKB-SubCell"/>
</dbReference>
<dbReference type="GO" id="GO:0042286">
    <property type="term" value="F:glutamate-1-semialdehyde 2,1-aminomutase activity"/>
    <property type="evidence" value="ECO:0007669"/>
    <property type="project" value="UniProtKB-UniRule"/>
</dbReference>
<dbReference type="GO" id="GO:0030170">
    <property type="term" value="F:pyridoxal phosphate binding"/>
    <property type="evidence" value="ECO:0007669"/>
    <property type="project" value="InterPro"/>
</dbReference>
<dbReference type="GO" id="GO:0008483">
    <property type="term" value="F:transaminase activity"/>
    <property type="evidence" value="ECO:0007669"/>
    <property type="project" value="InterPro"/>
</dbReference>
<dbReference type="GO" id="GO:0006782">
    <property type="term" value="P:protoporphyrinogen IX biosynthetic process"/>
    <property type="evidence" value="ECO:0007669"/>
    <property type="project" value="UniProtKB-UniRule"/>
</dbReference>
<dbReference type="CDD" id="cd00610">
    <property type="entry name" value="OAT_like"/>
    <property type="match status" value="1"/>
</dbReference>
<dbReference type="FunFam" id="3.40.640.10:FF:000021">
    <property type="entry name" value="Glutamate-1-semialdehyde 2,1-aminomutase"/>
    <property type="match status" value="1"/>
</dbReference>
<dbReference type="Gene3D" id="3.90.1150.10">
    <property type="entry name" value="Aspartate Aminotransferase, domain 1"/>
    <property type="match status" value="1"/>
</dbReference>
<dbReference type="Gene3D" id="3.40.640.10">
    <property type="entry name" value="Type I PLP-dependent aspartate aminotransferase-like (Major domain)"/>
    <property type="match status" value="1"/>
</dbReference>
<dbReference type="HAMAP" id="MF_00375">
    <property type="entry name" value="HemL_aminotrans_3"/>
    <property type="match status" value="1"/>
</dbReference>
<dbReference type="InterPro" id="IPR004639">
    <property type="entry name" value="4pyrrol_synth_GluAld_NH2Trfase"/>
</dbReference>
<dbReference type="InterPro" id="IPR005814">
    <property type="entry name" value="Aminotrans_3"/>
</dbReference>
<dbReference type="InterPro" id="IPR049704">
    <property type="entry name" value="Aminotrans_3_PPA_site"/>
</dbReference>
<dbReference type="InterPro" id="IPR015424">
    <property type="entry name" value="PyrdxlP-dep_Trfase"/>
</dbReference>
<dbReference type="InterPro" id="IPR015421">
    <property type="entry name" value="PyrdxlP-dep_Trfase_major"/>
</dbReference>
<dbReference type="InterPro" id="IPR015422">
    <property type="entry name" value="PyrdxlP-dep_Trfase_small"/>
</dbReference>
<dbReference type="NCBIfam" id="TIGR00713">
    <property type="entry name" value="hemL"/>
    <property type="match status" value="1"/>
</dbReference>
<dbReference type="NCBIfam" id="NF000818">
    <property type="entry name" value="PRK00062.1"/>
    <property type="match status" value="1"/>
</dbReference>
<dbReference type="PANTHER" id="PTHR43713">
    <property type="entry name" value="GLUTAMATE-1-SEMIALDEHYDE 2,1-AMINOMUTASE"/>
    <property type="match status" value="1"/>
</dbReference>
<dbReference type="PANTHER" id="PTHR43713:SF3">
    <property type="entry name" value="GLUTAMATE-1-SEMIALDEHYDE 2,1-AMINOMUTASE 1, CHLOROPLASTIC-RELATED"/>
    <property type="match status" value="1"/>
</dbReference>
<dbReference type="Pfam" id="PF00202">
    <property type="entry name" value="Aminotran_3"/>
    <property type="match status" value="1"/>
</dbReference>
<dbReference type="SUPFAM" id="SSF53383">
    <property type="entry name" value="PLP-dependent transferases"/>
    <property type="match status" value="1"/>
</dbReference>
<dbReference type="PROSITE" id="PS00600">
    <property type="entry name" value="AA_TRANSFER_CLASS_3"/>
    <property type="match status" value="1"/>
</dbReference>
<comment type="catalytic activity">
    <reaction evidence="1">
        <text>(S)-4-amino-5-oxopentanoate = 5-aminolevulinate</text>
        <dbReference type="Rhea" id="RHEA:14265"/>
        <dbReference type="ChEBI" id="CHEBI:57501"/>
        <dbReference type="ChEBI" id="CHEBI:356416"/>
        <dbReference type="EC" id="5.4.3.8"/>
    </reaction>
</comment>
<comment type="cofactor">
    <cofactor evidence="1">
        <name>pyridoxal 5'-phosphate</name>
        <dbReference type="ChEBI" id="CHEBI:597326"/>
    </cofactor>
</comment>
<comment type="pathway">
    <text evidence="1">Porphyrin-containing compound metabolism; protoporphyrin-IX biosynthesis; 5-aminolevulinate from L-glutamyl-tRNA(Glu): step 2/2.</text>
</comment>
<comment type="subunit">
    <text evidence="1">Homodimer.</text>
</comment>
<comment type="subcellular location">
    <subcellularLocation>
        <location evidence="1">Cytoplasm</location>
    </subcellularLocation>
</comment>
<comment type="similarity">
    <text evidence="1">Belongs to the class-III pyridoxal-phosphate-dependent aminotransferase family. HemL subfamily.</text>
</comment>
<accession>A9VIT5</accession>
<organism>
    <name type="scientific">Bacillus mycoides (strain KBAB4)</name>
    <name type="common">Bacillus weihenstephanensis</name>
    <dbReference type="NCBI Taxonomy" id="315730"/>
    <lineage>
        <taxon>Bacteria</taxon>
        <taxon>Bacillati</taxon>
        <taxon>Bacillota</taxon>
        <taxon>Bacilli</taxon>
        <taxon>Bacillales</taxon>
        <taxon>Bacillaceae</taxon>
        <taxon>Bacillus</taxon>
        <taxon>Bacillus cereus group</taxon>
    </lineage>
</organism>
<keyword id="KW-0963">Cytoplasm</keyword>
<keyword id="KW-0413">Isomerase</keyword>
<keyword id="KW-0627">Porphyrin biosynthesis</keyword>
<keyword id="KW-0663">Pyridoxal phosphate</keyword>
<gene>
    <name evidence="1" type="primary">hemL2</name>
    <name type="ordered locus">BcerKBAB4_4306</name>
</gene>
<name>GSA2_BACMK</name>
<evidence type="ECO:0000255" key="1">
    <source>
        <dbReference type="HAMAP-Rule" id="MF_00375"/>
    </source>
</evidence>
<proteinExistence type="inferred from homology"/>